<accession>Q8TXZ9</accession>
<name>TRPF_METKA</name>
<reference key="1">
    <citation type="journal article" date="2002" name="Proc. Natl. Acad. Sci. U.S.A.">
        <title>The complete genome of hyperthermophile Methanopyrus kandleri AV19 and monophyly of archaeal methanogens.</title>
        <authorList>
            <person name="Slesarev A.I."/>
            <person name="Mezhevaya K.V."/>
            <person name="Makarova K.S."/>
            <person name="Polushin N.N."/>
            <person name="Shcherbinina O.V."/>
            <person name="Shakhova V.V."/>
            <person name="Belova G.I."/>
            <person name="Aravind L."/>
            <person name="Natale D.A."/>
            <person name="Rogozin I.B."/>
            <person name="Tatusov R.L."/>
            <person name="Wolf Y.I."/>
            <person name="Stetter K.O."/>
            <person name="Malykh A.G."/>
            <person name="Koonin E.V."/>
            <person name="Kozyavkin S.A."/>
        </authorList>
    </citation>
    <scope>NUCLEOTIDE SEQUENCE [LARGE SCALE GENOMIC DNA]</scope>
    <source>
        <strain>AV19 / DSM 6324 / JCM 9639 / NBRC 100938</strain>
    </source>
</reference>
<evidence type="ECO:0000255" key="1">
    <source>
        <dbReference type="HAMAP-Rule" id="MF_00135"/>
    </source>
</evidence>
<comment type="catalytic activity">
    <reaction evidence="1">
        <text>N-(5-phospho-beta-D-ribosyl)anthranilate = 1-(2-carboxyphenylamino)-1-deoxy-D-ribulose 5-phosphate</text>
        <dbReference type="Rhea" id="RHEA:21540"/>
        <dbReference type="ChEBI" id="CHEBI:18277"/>
        <dbReference type="ChEBI" id="CHEBI:58613"/>
        <dbReference type="EC" id="5.3.1.24"/>
    </reaction>
</comment>
<comment type="pathway">
    <text evidence="1">Amino-acid biosynthesis; L-tryptophan biosynthesis; L-tryptophan from chorismate: step 3/5.</text>
</comment>
<comment type="similarity">
    <text evidence="1">Belongs to the TrpF family.</text>
</comment>
<sequence length="216" mass="23294">MVRVKICGITRPEDAATADEAGTDAVGCVVEVPVSTPRKVSAEHANEVFSVVSPFVSRVAVLMDNLEPIDRLEEATAVQLHGTEDPETCEELSELGLDVIKTFWVDQRGSVWLGEELIGDEVLAEYCEIVDAVLLDTKSAEGGGSGERHDWDASARLVRRLDVPVILAGGLNPENVREAVEKVRPYAVDTSSGVEKEPGIKDPEAIAEFVRATKSV</sequence>
<organism>
    <name type="scientific">Methanopyrus kandleri (strain AV19 / DSM 6324 / JCM 9639 / NBRC 100938)</name>
    <dbReference type="NCBI Taxonomy" id="190192"/>
    <lineage>
        <taxon>Archaea</taxon>
        <taxon>Methanobacteriati</taxon>
        <taxon>Methanobacteriota</taxon>
        <taxon>Methanomada group</taxon>
        <taxon>Methanopyri</taxon>
        <taxon>Methanopyrales</taxon>
        <taxon>Methanopyraceae</taxon>
        <taxon>Methanopyrus</taxon>
    </lineage>
</organism>
<dbReference type="EC" id="5.3.1.24" evidence="1"/>
<dbReference type="EMBL" id="AE009439">
    <property type="protein sequence ID" value="AAM01723.1"/>
    <property type="molecule type" value="Genomic_DNA"/>
</dbReference>
<dbReference type="RefSeq" id="WP_011018878.1">
    <property type="nucleotide sequence ID" value="NC_003551.1"/>
</dbReference>
<dbReference type="SMR" id="Q8TXZ9"/>
<dbReference type="FunCoup" id="Q8TXZ9">
    <property type="interactions" value="69"/>
</dbReference>
<dbReference type="STRING" id="190192.MK0508"/>
<dbReference type="PaxDb" id="190192-MK0508"/>
<dbReference type="EnsemblBacteria" id="AAM01723">
    <property type="protein sequence ID" value="AAM01723"/>
    <property type="gene ID" value="MK0508"/>
</dbReference>
<dbReference type="GeneID" id="1476609"/>
<dbReference type="KEGG" id="mka:MK0508"/>
<dbReference type="PATRIC" id="fig|190192.8.peg.539"/>
<dbReference type="HOGENOM" id="CLU_076364_2_1_2"/>
<dbReference type="InParanoid" id="Q8TXZ9"/>
<dbReference type="OrthoDB" id="27513at2157"/>
<dbReference type="UniPathway" id="UPA00035">
    <property type="reaction ID" value="UER00042"/>
</dbReference>
<dbReference type="Proteomes" id="UP000001826">
    <property type="component" value="Chromosome"/>
</dbReference>
<dbReference type="GO" id="GO:0004640">
    <property type="term" value="F:phosphoribosylanthranilate isomerase activity"/>
    <property type="evidence" value="ECO:0007669"/>
    <property type="project" value="UniProtKB-UniRule"/>
</dbReference>
<dbReference type="GO" id="GO:0000162">
    <property type="term" value="P:L-tryptophan biosynthetic process"/>
    <property type="evidence" value="ECO:0007669"/>
    <property type="project" value="UniProtKB-UniRule"/>
</dbReference>
<dbReference type="CDD" id="cd00405">
    <property type="entry name" value="PRAI"/>
    <property type="match status" value="1"/>
</dbReference>
<dbReference type="Gene3D" id="3.20.20.70">
    <property type="entry name" value="Aldolase class I"/>
    <property type="match status" value="1"/>
</dbReference>
<dbReference type="HAMAP" id="MF_00135">
    <property type="entry name" value="PRAI"/>
    <property type="match status" value="1"/>
</dbReference>
<dbReference type="InterPro" id="IPR013785">
    <property type="entry name" value="Aldolase_TIM"/>
</dbReference>
<dbReference type="InterPro" id="IPR001240">
    <property type="entry name" value="PRAI_dom"/>
</dbReference>
<dbReference type="InterPro" id="IPR011060">
    <property type="entry name" value="RibuloseP-bd_barrel"/>
</dbReference>
<dbReference type="InterPro" id="IPR044643">
    <property type="entry name" value="TrpF_fam"/>
</dbReference>
<dbReference type="PANTHER" id="PTHR42894">
    <property type="entry name" value="N-(5'-PHOSPHORIBOSYL)ANTHRANILATE ISOMERASE"/>
    <property type="match status" value="1"/>
</dbReference>
<dbReference type="PANTHER" id="PTHR42894:SF1">
    <property type="entry name" value="N-(5'-PHOSPHORIBOSYL)ANTHRANILATE ISOMERASE"/>
    <property type="match status" value="1"/>
</dbReference>
<dbReference type="Pfam" id="PF00697">
    <property type="entry name" value="PRAI"/>
    <property type="match status" value="1"/>
</dbReference>
<dbReference type="SUPFAM" id="SSF51366">
    <property type="entry name" value="Ribulose-phoshate binding barrel"/>
    <property type="match status" value="1"/>
</dbReference>
<gene>
    <name evidence="1" type="primary">trpF</name>
    <name type="ordered locus">MK0508</name>
</gene>
<keyword id="KW-0028">Amino-acid biosynthesis</keyword>
<keyword id="KW-0057">Aromatic amino acid biosynthesis</keyword>
<keyword id="KW-0413">Isomerase</keyword>
<keyword id="KW-1185">Reference proteome</keyword>
<keyword id="KW-0822">Tryptophan biosynthesis</keyword>
<proteinExistence type="inferred from homology"/>
<protein>
    <recommendedName>
        <fullName evidence="1">N-(5'-phosphoribosyl)anthranilate isomerase</fullName>
        <shortName evidence="1">PRAI</shortName>
        <ecNumber evidence="1">5.3.1.24</ecNumber>
    </recommendedName>
</protein>
<feature type="chain" id="PRO_0000154404" description="N-(5'-phosphoribosyl)anthranilate isomerase">
    <location>
        <begin position="1"/>
        <end position="216"/>
    </location>
</feature>